<reference key="1">
    <citation type="journal article" date="2006" name="PLoS Genet.">
        <title>Comparative genomics of emerging human ehrlichiosis agents.</title>
        <authorList>
            <person name="Dunning Hotopp J.C."/>
            <person name="Lin M."/>
            <person name="Madupu R."/>
            <person name="Crabtree J."/>
            <person name="Angiuoli S.V."/>
            <person name="Eisen J.A."/>
            <person name="Seshadri R."/>
            <person name="Ren Q."/>
            <person name="Wu M."/>
            <person name="Utterback T.R."/>
            <person name="Smith S."/>
            <person name="Lewis M."/>
            <person name="Khouri H."/>
            <person name="Zhang C."/>
            <person name="Niu H."/>
            <person name="Lin Q."/>
            <person name="Ohashi N."/>
            <person name="Zhi N."/>
            <person name="Nelson W.C."/>
            <person name="Brinkac L.M."/>
            <person name="Dodson R.J."/>
            <person name="Rosovitz M.J."/>
            <person name="Sundaram J.P."/>
            <person name="Daugherty S.C."/>
            <person name="Davidsen T."/>
            <person name="Durkin A.S."/>
            <person name="Gwinn M.L."/>
            <person name="Haft D.H."/>
            <person name="Selengut J.D."/>
            <person name="Sullivan S.A."/>
            <person name="Zafar N."/>
            <person name="Zhou L."/>
            <person name="Benahmed F."/>
            <person name="Forberger H."/>
            <person name="Halpin R."/>
            <person name="Mulligan S."/>
            <person name="Robinson J."/>
            <person name="White O."/>
            <person name="Rikihisa Y."/>
            <person name="Tettelin H."/>
        </authorList>
    </citation>
    <scope>NUCLEOTIDE SEQUENCE [LARGE SCALE GENOMIC DNA]</scope>
    <source>
        <strain>ATCC CRL-10679 / Arkansas</strain>
    </source>
</reference>
<proteinExistence type="inferred from homology"/>
<evidence type="ECO:0000255" key="1">
    <source>
        <dbReference type="HAMAP-Rule" id="MF_01454"/>
    </source>
</evidence>
<evidence type="ECO:0000255" key="2">
    <source>
        <dbReference type="PROSITE-ProRule" id="PRU01231"/>
    </source>
</evidence>
<gene>
    <name evidence="1" type="primary">obg</name>
    <name type="ordered locus">ECH_0543</name>
</gene>
<comment type="function">
    <text evidence="1">An essential GTPase which binds GTP, GDP and possibly (p)ppGpp with moderate affinity, with high nucleotide exchange rates and a fairly low GTP hydrolysis rate. Plays a role in control of the cell cycle, stress response, ribosome biogenesis and in those bacteria that undergo differentiation, in morphogenesis control.</text>
</comment>
<comment type="cofactor">
    <cofactor evidence="1">
        <name>Mg(2+)</name>
        <dbReference type="ChEBI" id="CHEBI:18420"/>
    </cofactor>
</comment>
<comment type="subunit">
    <text evidence="1">Monomer.</text>
</comment>
<comment type="subcellular location">
    <subcellularLocation>
        <location evidence="1">Cytoplasm</location>
    </subcellularLocation>
</comment>
<comment type="similarity">
    <text evidence="1">Belongs to the TRAFAC class OBG-HflX-like GTPase superfamily. OBG GTPase family.</text>
</comment>
<sequence length="340" mass="37428">MSFIDEAKVYLKAGNGGNGCSSFRREKFIEFGGPDGGNGGNGGNIVFATSNHINTLLYFRYKQHIKAENGNPGSGKKKSGSSGKDIIIKVPIGTQLYDEDGILIADLSSENQKVIVAQGGKGGTGNANYKTSTNRAPRYFTLGEAGEEKYITLKLKIISDIGIIGLPNAGKSSFLASCTDSKTKIADYPFTTLEPHLGVAFIDNRELVLADIPGLIAGAHLGYGIGDKFLKHIERCSTLLHIIDCTLDDIIDSYECIRKELLLYNKELINKPEFIVLNKSDLLEKKEITKKKQLLSQYTKKEIFVSSIKDNRYAILSTLIQYIHKKNANAEPYIYDPFNI</sequence>
<dbReference type="EC" id="3.6.5.-" evidence="1"/>
<dbReference type="EMBL" id="CP000236">
    <property type="protein sequence ID" value="ABD45515.1"/>
    <property type="molecule type" value="Genomic_DNA"/>
</dbReference>
<dbReference type="RefSeq" id="WP_006010554.1">
    <property type="nucleotide sequence ID" value="NC_007799.1"/>
</dbReference>
<dbReference type="SMR" id="Q2GGS7"/>
<dbReference type="STRING" id="205920.ECH_0543"/>
<dbReference type="KEGG" id="ech:ECH_0543"/>
<dbReference type="eggNOG" id="COG0536">
    <property type="taxonomic scope" value="Bacteria"/>
</dbReference>
<dbReference type="HOGENOM" id="CLU_011747_2_0_5"/>
<dbReference type="OrthoDB" id="9807318at2"/>
<dbReference type="Proteomes" id="UP000008320">
    <property type="component" value="Chromosome"/>
</dbReference>
<dbReference type="GO" id="GO:0005737">
    <property type="term" value="C:cytoplasm"/>
    <property type="evidence" value="ECO:0007669"/>
    <property type="project" value="UniProtKB-SubCell"/>
</dbReference>
<dbReference type="GO" id="GO:0005525">
    <property type="term" value="F:GTP binding"/>
    <property type="evidence" value="ECO:0007669"/>
    <property type="project" value="UniProtKB-UniRule"/>
</dbReference>
<dbReference type="GO" id="GO:0003924">
    <property type="term" value="F:GTPase activity"/>
    <property type="evidence" value="ECO:0007669"/>
    <property type="project" value="UniProtKB-UniRule"/>
</dbReference>
<dbReference type="GO" id="GO:0000287">
    <property type="term" value="F:magnesium ion binding"/>
    <property type="evidence" value="ECO:0007669"/>
    <property type="project" value="InterPro"/>
</dbReference>
<dbReference type="GO" id="GO:0042254">
    <property type="term" value="P:ribosome biogenesis"/>
    <property type="evidence" value="ECO:0007669"/>
    <property type="project" value="UniProtKB-UniRule"/>
</dbReference>
<dbReference type="CDD" id="cd01898">
    <property type="entry name" value="Obg"/>
    <property type="match status" value="1"/>
</dbReference>
<dbReference type="FunFam" id="2.70.210.12:FF:000001">
    <property type="entry name" value="GTPase Obg"/>
    <property type="match status" value="1"/>
</dbReference>
<dbReference type="Gene3D" id="2.70.210.12">
    <property type="entry name" value="GTP1/OBG domain"/>
    <property type="match status" value="1"/>
</dbReference>
<dbReference type="Gene3D" id="3.40.50.300">
    <property type="entry name" value="P-loop containing nucleotide triphosphate hydrolases"/>
    <property type="match status" value="1"/>
</dbReference>
<dbReference type="HAMAP" id="MF_01454">
    <property type="entry name" value="GTPase_Obg"/>
    <property type="match status" value="1"/>
</dbReference>
<dbReference type="InterPro" id="IPR031167">
    <property type="entry name" value="G_OBG"/>
</dbReference>
<dbReference type="InterPro" id="IPR006073">
    <property type="entry name" value="GTP-bd"/>
</dbReference>
<dbReference type="InterPro" id="IPR014100">
    <property type="entry name" value="GTP-bd_Obg/CgtA"/>
</dbReference>
<dbReference type="InterPro" id="IPR006169">
    <property type="entry name" value="GTP1_OBG_dom"/>
</dbReference>
<dbReference type="InterPro" id="IPR036726">
    <property type="entry name" value="GTP1_OBG_dom_sf"/>
</dbReference>
<dbReference type="InterPro" id="IPR045086">
    <property type="entry name" value="OBG_GTPase"/>
</dbReference>
<dbReference type="InterPro" id="IPR027417">
    <property type="entry name" value="P-loop_NTPase"/>
</dbReference>
<dbReference type="NCBIfam" id="TIGR02729">
    <property type="entry name" value="Obg_CgtA"/>
    <property type="match status" value="1"/>
</dbReference>
<dbReference type="NCBIfam" id="NF008955">
    <property type="entry name" value="PRK12297.1"/>
    <property type="match status" value="1"/>
</dbReference>
<dbReference type="NCBIfam" id="NF008956">
    <property type="entry name" value="PRK12299.1"/>
    <property type="match status" value="1"/>
</dbReference>
<dbReference type="PANTHER" id="PTHR11702">
    <property type="entry name" value="DEVELOPMENTALLY REGULATED GTP-BINDING PROTEIN-RELATED"/>
    <property type="match status" value="1"/>
</dbReference>
<dbReference type="PANTHER" id="PTHR11702:SF31">
    <property type="entry name" value="MITOCHONDRIAL RIBOSOME-ASSOCIATED GTPASE 2"/>
    <property type="match status" value="1"/>
</dbReference>
<dbReference type="Pfam" id="PF01018">
    <property type="entry name" value="GTP1_OBG"/>
    <property type="match status" value="1"/>
</dbReference>
<dbReference type="Pfam" id="PF01926">
    <property type="entry name" value="MMR_HSR1"/>
    <property type="match status" value="1"/>
</dbReference>
<dbReference type="PIRSF" id="PIRSF002401">
    <property type="entry name" value="GTP_bd_Obg/CgtA"/>
    <property type="match status" value="1"/>
</dbReference>
<dbReference type="PRINTS" id="PR00326">
    <property type="entry name" value="GTP1OBG"/>
</dbReference>
<dbReference type="SUPFAM" id="SSF82051">
    <property type="entry name" value="Obg GTP-binding protein N-terminal domain"/>
    <property type="match status" value="1"/>
</dbReference>
<dbReference type="SUPFAM" id="SSF52540">
    <property type="entry name" value="P-loop containing nucleoside triphosphate hydrolases"/>
    <property type="match status" value="1"/>
</dbReference>
<dbReference type="PROSITE" id="PS51710">
    <property type="entry name" value="G_OBG"/>
    <property type="match status" value="1"/>
</dbReference>
<dbReference type="PROSITE" id="PS51883">
    <property type="entry name" value="OBG"/>
    <property type="match status" value="1"/>
</dbReference>
<name>OBG_EHRCR</name>
<keyword id="KW-0963">Cytoplasm</keyword>
<keyword id="KW-0342">GTP-binding</keyword>
<keyword id="KW-0378">Hydrolase</keyword>
<keyword id="KW-0460">Magnesium</keyword>
<keyword id="KW-0479">Metal-binding</keyword>
<keyword id="KW-0547">Nucleotide-binding</keyword>
<keyword id="KW-1185">Reference proteome</keyword>
<accession>Q2GGS7</accession>
<organism>
    <name type="scientific">Ehrlichia chaffeensis (strain ATCC CRL-10679 / Arkansas)</name>
    <dbReference type="NCBI Taxonomy" id="205920"/>
    <lineage>
        <taxon>Bacteria</taxon>
        <taxon>Pseudomonadati</taxon>
        <taxon>Pseudomonadota</taxon>
        <taxon>Alphaproteobacteria</taxon>
        <taxon>Rickettsiales</taxon>
        <taxon>Anaplasmataceae</taxon>
        <taxon>Ehrlichia</taxon>
    </lineage>
</organism>
<feature type="chain" id="PRO_0000385900" description="GTPase Obg">
    <location>
        <begin position="1"/>
        <end position="340"/>
    </location>
</feature>
<feature type="domain" description="Obg" evidence="2">
    <location>
        <begin position="1"/>
        <end position="158"/>
    </location>
</feature>
<feature type="domain" description="OBG-type G" evidence="1">
    <location>
        <begin position="159"/>
        <end position="325"/>
    </location>
</feature>
<feature type="binding site" evidence="1">
    <location>
        <begin position="165"/>
        <end position="172"/>
    </location>
    <ligand>
        <name>GTP</name>
        <dbReference type="ChEBI" id="CHEBI:37565"/>
    </ligand>
</feature>
<feature type="binding site" evidence="1">
    <location>
        <position position="172"/>
    </location>
    <ligand>
        <name>Mg(2+)</name>
        <dbReference type="ChEBI" id="CHEBI:18420"/>
    </ligand>
</feature>
<feature type="binding site" evidence="1">
    <location>
        <begin position="190"/>
        <end position="194"/>
    </location>
    <ligand>
        <name>GTP</name>
        <dbReference type="ChEBI" id="CHEBI:37565"/>
    </ligand>
</feature>
<feature type="binding site" evidence="1">
    <location>
        <position position="192"/>
    </location>
    <ligand>
        <name>Mg(2+)</name>
        <dbReference type="ChEBI" id="CHEBI:18420"/>
    </ligand>
</feature>
<feature type="binding site" evidence="1">
    <location>
        <begin position="211"/>
        <end position="214"/>
    </location>
    <ligand>
        <name>GTP</name>
        <dbReference type="ChEBI" id="CHEBI:37565"/>
    </ligand>
</feature>
<feature type="binding site" evidence="1">
    <location>
        <begin position="278"/>
        <end position="281"/>
    </location>
    <ligand>
        <name>GTP</name>
        <dbReference type="ChEBI" id="CHEBI:37565"/>
    </ligand>
</feature>
<feature type="binding site" evidence="1">
    <location>
        <begin position="306"/>
        <end position="308"/>
    </location>
    <ligand>
        <name>GTP</name>
        <dbReference type="ChEBI" id="CHEBI:37565"/>
    </ligand>
</feature>
<protein>
    <recommendedName>
        <fullName evidence="1">GTPase Obg</fullName>
        <ecNumber evidence="1">3.6.5.-</ecNumber>
    </recommendedName>
    <alternativeName>
        <fullName evidence="1">GTP-binding protein Obg</fullName>
    </alternativeName>
</protein>